<keyword id="KW-0002">3D-structure</keyword>
<keyword id="KW-0131">Cell cycle</keyword>
<keyword id="KW-0132">Cell division</keyword>
<keyword id="KW-0175">Coiled coil</keyword>
<keyword id="KW-0472">Membrane</keyword>
<keyword id="KW-0498">Mitosis</keyword>
<keyword id="KW-0509">mRNA transport</keyword>
<keyword id="KW-0906">Nuclear pore complex</keyword>
<keyword id="KW-0539">Nucleus</keyword>
<keyword id="KW-0597">Phosphoprotein</keyword>
<keyword id="KW-0653">Protein transport</keyword>
<keyword id="KW-1185">Reference proteome</keyword>
<keyword id="KW-0677">Repeat</keyword>
<keyword id="KW-0811">Translocation</keyword>
<keyword id="KW-0813">Transport</keyword>
<gene>
    <name type="primary">ASM4</name>
    <name type="synonym">NUP59</name>
    <name type="ordered locus">YDL088C</name>
    <name type="ORF">D2420</name>
</gene>
<protein>
    <recommendedName>
        <fullName>Nucleoporin ASM4</fullName>
    </recommendedName>
    <alternativeName>
        <fullName>Nuclear pore protein NUP59</fullName>
    </alternativeName>
</protein>
<feature type="chain" id="PRO_0000204878" description="Nucleoporin ASM4">
    <location>
        <begin position="1"/>
        <end position="528"/>
    </location>
</feature>
<feature type="repeat" description="FG 1" evidence="6">
    <location>
        <begin position="2"/>
        <end position="3"/>
    </location>
</feature>
<feature type="repeat" description="FG 2" evidence="6">
    <location>
        <begin position="61"/>
        <end position="62"/>
    </location>
</feature>
<feature type="repeat" description="FG 3" evidence="6">
    <location>
        <begin position="195"/>
        <end position="196"/>
    </location>
</feature>
<feature type="domain" description="RRM Nup35-type" evidence="3">
    <location>
        <begin position="265"/>
        <end position="394"/>
    </location>
</feature>
<feature type="repeat" description="FG 4" evidence="6">
    <location>
        <begin position="274"/>
        <end position="275"/>
    </location>
</feature>
<feature type="repeat" description="FG 5" evidence="6">
    <location>
        <begin position="291"/>
        <end position="292"/>
    </location>
</feature>
<feature type="repeat" description="FG 6" evidence="6">
    <location>
        <begin position="523"/>
        <end position="524"/>
    </location>
</feature>
<feature type="region of interest" description="Disordered" evidence="4">
    <location>
        <begin position="23"/>
        <end position="64"/>
    </location>
</feature>
<feature type="region of interest" description="Disordered" evidence="4">
    <location>
        <begin position="88"/>
        <end position="144"/>
    </location>
</feature>
<feature type="coiled-coil region" evidence="2">
    <location>
        <begin position="490"/>
        <end position="510"/>
    </location>
</feature>
<feature type="compositionally biased region" description="Low complexity" evidence="4">
    <location>
        <begin position="23"/>
        <end position="50"/>
    </location>
</feature>
<feature type="compositionally biased region" description="Polar residues" evidence="4">
    <location>
        <begin position="51"/>
        <end position="64"/>
    </location>
</feature>
<feature type="compositionally biased region" description="Polar residues" evidence="4">
    <location>
        <begin position="97"/>
        <end position="108"/>
    </location>
</feature>
<feature type="compositionally biased region" description="Basic residues" evidence="4">
    <location>
        <begin position="110"/>
        <end position="125"/>
    </location>
</feature>
<feature type="compositionally biased region" description="Low complexity" evidence="4">
    <location>
        <begin position="127"/>
        <end position="141"/>
    </location>
</feature>
<feature type="modified residue" description="Phosphoserine" evidence="11">
    <location>
        <position position="458"/>
    </location>
</feature>
<feature type="modified residue" description="Phosphoserine" evidence="11">
    <location>
        <position position="464"/>
    </location>
</feature>
<feature type="sequence conflict" description="In Ref. 1; CAA54130." evidence="10" ref="1">
    <original>F</original>
    <variation>L</variation>
    <location>
        <position position="114"/>
    </location>
</feature>
<feature type="sequence conflict" description="In Ref. 5; AAT92991." evidence="10" ref="5">
    <original>N</original>
    <variation>S</variation>
    <location>
        <position position="171"/>
    </location>
</feature>
<feature type="sequence conflict" description="In Ref. 1; CAA54130." evidence="10" ref="1">
    <original>PAGHAGNPTNISSPIVANSPNKRLDVIDGKLPFMQNAGPNSNIPNLLRNLESKMRQQEAKYRNNEPAGFTHKLSNWLFGWNDL</original>
    <variation>LPVMLVIQQIFQVQ</variation>
    <location>
        <begin position="446"/>
        <end position="528"/>
    </location>
</feature>
<comment type="function">
    <text evidence="1 5 6 9">Functions as a component of the nuclear pore complex (NPC). NPC components, collectively referred to as nucleoporins (NUPs), can play the role of both NPC structural components and of docking or interaction partners for transiently associated nuclear transport factors. Active directional transport is assured by both, a Phe-Gly (FG) repeat affinity gradient for these transport factors across the NPC and a transport cofactor concentration gradient across the nuclear envelope (GSP1 and GSP2 GTPases associated predominantly with GTP in the nucleus, with GDP in the cytoplasm). May have a mitosis control function (By similarity).</text>
</comment>
<comment type="subunit">
    <text evidence="5">Component of the nuclear pore complex (NPC). NPC constitutes the exclusive means of nucleocytoplasmic transport. NPCs allow the passive diffusion of ions and small molecules and the active, nuclear transport receptor-mediated bidirectional transport of macromolecules such as proteins, RNAs, ribonucleoparticles (RNPs), and ribosomal subunits across the nuclear envelope. Due to its 8-fold rotational symmetry, all subunits are present with 8 copies or multiples thereof. ASM4 may form a subcomplex with NUP53, NDC1, and NUP170.</text>
</comment>
<comment type="interaction">
    <interactant intactId="EBI-3035">
        <id>Q05166</id>
    </interactant>
    <interactant intactId="EBI-11950">
        <id>P32500</id>
        <label>NDC1</label>
    </interactant>
    <organismsDiffer>false</organismsDiffer>
    <experiments>4</experiments>
</comment>
<comment type="interaction">
    <interactant intactId="EBI-3035">
        <id>Q05166</id>
    </interactant>
    <interactant intactId="EBI-25846">
        <id>P47054</id>
        <label>NUP192</label>
    </interactant>
    <organismsDiffer>false</organismsDiffer>
    <experiments>3</experiments>
</comment>
<comment type="subcellular location">
    <subcellularLocation>
        <location evidence="5">Nucleus</location>
        <location evidence="5">Nuclear pore complex</location>
    </subcellularLocation>
    <subcellularLocation>
        <location>Nucleus membrane</location>
        <topology>Peripheral membrane protein</topology>
        <orientation>Cytoplasmic side</orientation>
    </subcellularLocation>
    <subcellularLocation>
        <location>Nucleus membrane</location>
        <topology>Peripheral membrane protein</topology>
        <orientation>Nucleoplasmic side</orientation>
    </subcellularLocation>
    <text>Symmetric distribution.</text>
</comment>
<comment type="domain">
    <text>Contains FG repeats. FG repeats are interaction sites for karyopherins (importins, exportins) and form probably an affinity gradient, guiding the transport proteins unidirectionally with their cargo through the NPC. FG repeat regions are highly flexible and lack ordered secondary structure. The overall conservation of FG repeats regarding exact sequence, spacing, and repeat unit length is limited. FG repeat types and their physico-chemical environment change across the NPC from the nucleoplasmic to the cytoplasmic side.</text>
</comment>
<comment type="domain">
    <text>The RRM Nup35-type domain might be involved in the control of mitosis.</text>
</comment>
<comment type="PTM">
    <text evidence="8">Phosphorylated by CDC28.</text>
</comment>
<comment type="miscellaneous">
    <text evidence="7">Present with 2740 molecules/cell in log phase SD medium.</text>
</comment>
<accession>Q05166</accession>
<accession>D6VRR0</accession>
<accession>E9P903</accession>
<accession>Q12456</accession>
<evidence type="ECO:0000250" key="1"/>
<evidence type="ECO:0000255" key="2"/>
<evidence type="ECO:0000255" key="3">
    <source>
        <dbReference type="PROSITE-ProRule" id="PRU00804"/>
    </source>
</evidence>
<evidence type="ECO:0000256" key="4">
    <source>
        <dbReference type="SAM" id="MobiDB-lite"/>
    </source>
</evidence>
<evidence type="ECO:0000269" key="5">
    <source>
    </source>
</evidence>
<evidence type="ECO:0000269" key="6">
    <source>
    </source>
</evidence>
<evidence type="ECO:0000269" key="7">
    <source>
    </source>
</evidence>
<evidence type="ECO:0000269" key="8">
    <source>
    </source>
</evidence>
<evidence type="ECO:0000269" key="9">
    <source>
    </source>
</evidence>
<evidence type="ECO:0000305" key="10"/>
<evidence type="ECO:0007744" key="11">
    <source>
    </source>
</evidence>
<reference key="1">
    <citation type="journal article" date="1995" name="Mol. Gen. Genet.">
        <title>Suppressors of thermosensitive mutations in the DNA polymerase delta gene of Saccharomyces cerevisiae.</title>
        <authorList>
            <person name="Giot L."/>
            <person name="Simon M."/>
            <person name="Dubois C."/>
            <person name="Faye G."/>
        </authorList>
    </citation>
    <scope>NUCLEOTIDE SEQUENCE [GENOMIC DNA]</scope>
</reference>
<reference key="2">
    <citation type="journal article" date="1996" name="Yeast">
        <title>The sequence of a 16,691 bp segment of Saccharomyces cerevisiae chromosome IV identifies the DUN1, PMT1, PMT5, SRP14 and DPR1 genes, and five new open reading frames.</title>
        <authorList>
            <person name="Boskovic J."/>
            <person name="Soler-Mira A."/>
            <person name="Garcia-Cantalejo J.M."/>
            <person name="Ballesta J.P.G."/>
            <person name="Jimenez A."/>
            <person name="Remacha M.A."/>
        </authorList>
    </citation>
    <scope>NUCLEOTIDE SEQUENCE [GENOMIC DNA]</scope>
    <source>
        <strain>ATCC 96604 / S288c / FY1679</strain>
    </source>
</reference>
<reference key="3">
    <citation type="journal article" date="1997" name="Nature">
        <title>The nucleotide sequence of Saccharomyces cerevisiae chromosome IV.</title>
        <authorList>
            <person name="Jacq C."/>
            <person name="Alt-Moerbe J."/>
            <person name="Andre B."/>
            <person name="Arnold W."/>
            <person name="Bahr A."/>
            <person name="Ballesta J.P.G."/>
            <person name="Bargues M."/>
            <person name="Baron L."/>
            <person name="Becker A."/>
            <person name="Biteau N."/>
            <person name="Bloecker H."/>
            <person name="Blugeon C."/>
            <person name="Boskovic J."/>
            <person name="Brandt P."/>
            <person name="Brueckner M."/>
            <person name="Buitrago M.J."/>
            <person name="Coster F."/>
            <person name="Delaveau T."/>
            <person name="del Rey F."/>
            <person name="Dujon B."/>
            <person name="Eide L.G."/>
            <person name="Garcia-Cantalejo J.M."/>
            <person name="Goffeau A."/>
            <person name="Gomez-Peris A."/>
            <person name="Granotier C."/>
            <person name="Hanemann V."/>
            <person name="Hankeln T."/>
            <person name="Hoheisel J.D."/>
            <person name="Jaeger W."/>
            <person name="Jimenez A."/>
            <person name="Jonniaux J.-L."/>
            <person name="Kraemer C."/>
            <person name="Kuester H."/>
            <person name="Laamanen P."/>
            <person name="Legros Y."/>
            <person name="Louis E.J."/>
            <person name="Moeller-Rieker S."/>
            <person name="Monnet A."/>
            <person name="Moro M."/>
            <person name="Mueller-Auer S."/>
            <person name="Nussbaumer B."/>
            <person name="Paricio N."/>
            <person name="Paulin L."/>
            <person name="Perea J."/>
            <person name="Perez-Alonso M."/>
            <person name="Perez-Ortin J.E."/>
            <person name="Pohl T.M."/>
            <person name="Prydz H."/>
            <person name="Purnelle B."/>
            <person name="Rasmussen S.W."/>
            <person name="Remacha M.A."/>
            <person name="Revuelta J.L."/>
            <person name="Rieger M."/>
            <person name="Salom D."/>
            <person name="Saluz H.P."/>
            <person name="Saiz J.E."/>
            <person name="Saren A.-M."/>
            <person name="Schaefer M."/>
            <person name="Scharfe M."/>
            <person name="Schmidt E.R."/>
            <person name="Schneider C."/>
            <person name="Scholler P."/>
            <person name="Schwarz S."/>
            <person name="Soler-Mira A."/>
            <person name="Urrestarazu L.A."/>
            <person name="Verhasselt P."/>
            <person name="Vissers S."/>
            <person name="Voet M."/>
            <person name="Volckaert G."/>
            <person name="Wagner G."/>
            <person name="Wambutt R."/>
            <person name="Wedler E."/>
            <person name="Wedler H."/>
            <person name="Woelfl S."/>
            <person name="Harris D.E."/>
            <person name="Bowman S."/>
            <person name="Brown D."/>
            <person name="Churcher C.M."/>
            <person name="Connor R."/>
            <person name="Dedman K."/>
            <person name="Gentles S."/>
            <person name="Hamlin N."/>
            <person name="Hunt S."/>
            <person name="Jones L."/>
            <person name="McDonald S."/>
            <person name="Murphy L.D."/>
            <person name="Niblett D."/>
            <person name="Odell C."/>
            <person name="Oliver K."/>
            <person name="Rajandream M.A."/>
            <person name="Richards C."/>
            <person name="Shore L."/>
            <person name="Walsh S.V."/>
            <person name="Barrell B.G."/>
            <person name="Dietrich F.S."/>
            <person name="Mulligan J.T."/>
            <person name="Allen E."/>
            <person name="Araujo R."/>
            <person name="Aviles E."/>
            <person name="Berno A."/>
            <person name="Carpenter J."/>
            <person name="Chen E."/>
            <person name="Cherry J.M."/>
            <person name="Chung E."/>
            <person name="Duncan M."/>
            <person name="Hunicke-Smith S."/>
            <person name="Hyman R.W."/>
            <person name="Komp C."/>
            <person name="Lashkari D."/>
            <person name="Lew H."/>
            <person name="Lin D."/>
            <person name="Mosedale D."/>
            <person name="Nakahara K."/>
            <person name="Namath A."/>
            <person name="Oefner P."/>
            <person name="Oh C."/>
            <person name="Petel F.X."/>
            <person name="Roberts D."/>
            <person name="Schramm S."/>
            <person name="Schroeder M."/>
            <person name="Shogren T."/>
            <person name="Shroff N."/>
            <person name="Winant A."/>
            <person name="Yelton M.A."/>
            <person name="Botstein D."/>
            <person name="Davis R.W."/>
            <person name="Johnston M."/>
            <person name="Andrews S."/>
            <person name="Brinkman R."/>
            <person name="Cooper J."/>
            <person name="Ding H."/>
            <person name="Du Z."/>
            <person name="Favello A."/>
            <person name="Fulton L."/>
            <person name="Gattung S."/>
            <person name="Greco T."/>
            <person name="Hallsworth K."/>
            <person name="Hawkins J."/>
            <person name="Hillier L.W."/>
            <person name="Jier M."/>
            <person name="Johnson D."/>
            <person name="Johnston L."/>
            <person name="Kirsten J."/>
            <person name="Kucaba T."/>
            <person name="Langston Y."/>
            <person name="Latreille P."/>
            <person name="Le T."/>
            <person name="Mardis E."/>
            <person name="Menezes S."/>
            <person name="Miller N."/>
            <person name="Nhan M."/>
            <person name="Pauley A."/>
            <person name="Peluso D."/>
            <person name="Rifkin L."/>
            <person name="Riles L."/>
            <person name="Taich A."/>
            <person name="Trevaskis E."/>
            <person name="Vignati D."/>
            <person name="Wilcox L."/>
            <person name="Wohldman P."/>
            <person name="Vaudin M."/>
            <person name="Wilson R."/>
            <person name="Waterston R."/>
            <person name="Albermann K."/>
            <person name="Hani J."/>
            <person name="Heumann K."/>
            <person name="Kleine K."/>
            <person name="Mewes H.-W."/>
            <person name="Zollner A."/>
            <person name="Zaccaria P."/>
        </authorList>
    </citation>
    <scope>NUCLEOTIDE SEQUENCE [LARGE SCALE GENOMIC DNA]</scope>
    <source>
        <strain>ATCC 204508 / S288c</strain>
    </source>
</reference>
<reference key="4">
    <citation type="journal article" date="2014" name="G3 (Bethesda)">
        <title>The reference genome sequence of Saccharomyces cerevisiae: Then and now.</title>
        <authorList>
            <person name="Engel S.R."/>
            <person name="Dietrich F.S."/>
            <person name="Fisk D.G."/>
            <person name="Binkley G."/>
            <person name="Balakrishnan R."/>
            <person name="Costanzo M.C."/>
            <person name="Dwight S.S."/>
            <person name="Hitz B.C."/>
            <person name="Karra K."/>
            <person name="Nash R.S."/>
            <person name="Weng S."/>
            <person name="Wong E.D."/>
            <person name="Lloyd P."/>
            <person name="Skrzypek M.S."/>
            <person name="Miyasato S.R."/>
            <person name="Simison M."/>
            <person name="Cherry J.M."/>
        </authorList>
    </citation>
    <scope>GENOME REANNOTATION</scope>
    <source>
        <strain>ATCC 204508 / S288c</strain>
    </source>
</reference>
<reference key="5">
    <citation type="journal article" date="2007" name="Genome Res.">
        <title>Approaching a complete repository of sequence-verified protein-encoding clones for Saccharomyces cerevisiae.</title>
        <authorList>
            <person name="Hu Y."/>
            <person name="Rolfs A."/>
            <person name="Bhullar B."/>
            <person name="Murthy T.V.S."/>
            <person name="Zhu C."/>
            <person name="Berger M.F."/>
            <person name="Camargo A.A."/>
            <person name="Kelley F."/>
            <person name="McCarron S."/>
            <person name="Jepson D."/>
            <person name="Richardson A."/>
            <person name="Raphael J."/>
            <person name="Moreira D."/>
            <person name="Taycher E."/>
            <person name="Zuo D."/>
            <person name="Mohr S."/>
            <person name="Kane M.F."/>
            <person name="Williamson J."/>
            <person name="Simpson A.J.G."/>
            <person name="Bulyk M.L."/>
            <person name="Harlow E."/>
            <person name="Marsischky G."/>
            <person name="Kolodner R.D."/>
            <person name="LaBaer J."/>
        </authorList>
    </citation>
    <scope>NUCLEOTIDE SEQUENCE [GENOMIC DNA]</scope>
    <source>
        <strain>ATCC 204508 / S288c</strain>
    </source>
</reference>
<reference key="6">
    <citation type="journal article" date="1998" name="J. Cell Biol.">
        <title>Specific binding of the karyopherin Kap121p to a subunit of the nuclear pore complex containing Nup53p, Nup59p, and Nup170p.</title>
        <authorList>
            <person name="Marelli M."/>
            <person name="Aitchison J.D."/>
            <person name="Wozniak R.W."/>
        </authorList>
    </citation>
    <scope>FUNCTION</scope>
    <scope>SUBCOMPLEX WITH NUP170 AND NUP53</scope>
    <scope>INTERACTION WITH KARYOPHERIN PSE1</scope>
</reference>
<reference key="7">
    <citation type="journal article" date="2000" name="J. Cell Biol.">
        <title>The yeast nuclear pore complex: composition, architecture, and transport mechanism.</title>
        <authorList>
            <person name="Rout M.P."/>
            <person name="Aitchison J.D."/>
            <person name="Suprapto A."/>
            <person name="Hjertaas K."/>
            <person name="Zhao Y."/>
            <person name="Chait B.T."/>
        </authorList>
    </citation>
    <scope>FUNCTION</scope>
    <scope>IDENTIFICATION IN THE NUCLEAR PORE COMPLEX</scope>
    <scope>SUBCELLULAR LOCATION</scope>
</reference>
<reference key="8">
    <citation type="journal article" date="2003" name="Nature">
        <title>Global analysis of protein expression in yeast.</title>
        <authorList>
            <person name="Ghaemmaghami S."/>
            <person name="Huh W.-K."/>
            <person name="Bower K."/>
            <person name="Howson R.W."/>
            <person name="Belle A."/>
            <person name="Dephoure N."/>
            <person name="O'Shea E.K."/>
            <person name="Weissman J.S."/>
        </authorList>
    </citation>
    <scope>LEVEL OF PROTEIN EXPRESSION [LARGE SCALE ANALYSIS]</scope>
</reference>
<reference key="9">
    <citation type="journal article" date="2003" name="Proc. Natl. Acad. Sci. U.S.A.">
        <title>Disorder in the nuclear pore complex: the FG repeat regions of nucleoporins are natively unfolded.</title>
        <authorList>
            <person name="Denning D.P."/>
            <person name="Patel S.S."/>
            <person name="Uversky V."/>
            <person name="Fink A.L."/>
            <person name="Rexach M."/>
        </authorList>
    </citation>
    <scope>FUNCTION</scope>
    <scope>FG REPEAT STRUCTURE</scope>
</reference>
<reference key="10">
    <citation type="journal article" date="2000" name="Nature">
        <title>A comprehensive analysis of protein-protein interactions in Saccharomyces cerevisiae.</title>
        <authorList>
            <person name="Uetz P."/>
            <person name="Giot L."/>
            <person name="Cagney G."/>
            <person name="Mansfield T.A."/>
            <person name="Judson R.S."/>
            <person name="Knight J.R."/>
            <person name="Lockshon D."/>
            <person name="Narayan V."/>
            <person name="Srinivasan M."/>
            <person name="Pochart P."/>
            <person name="Qureshi-Emili A."/>
            <person name="Li Y."/>
            <person name="Godwin B."/>
            <person name="Conover D."/>
            <person name="Kalbfleisch T."/>
            <person name="Vijayadamodar G."/>
            <person name="Yang M."/>
            <person name="Johnston M."/>
            <person name="Fields S."/>
            <person name="Rothberg J.M."/>
        </authorList>
    </citation>
    <scope>INTERACTION</scope>
</reference>
<reference key="11">
    <citation type="journal article" date="2001" name="Proc. Natl. Acad. Sci. U.S.A.">
        <title>A comprehensive two-hybrid analysis to explore the yeast protein interactome.</title>
        <authorList>
            <person name="Ito T."/>
            <person name="Chiba T."/>
            <person name="Ozawa R."/>
            <person name="Yoshida M."/>
            <person name="Hattori M."/>
            <person name="Sakaki Y."/>
        </authorList>
    </citation>
    <scope>INTERACTION</scope>
</reference>
<reference key="12">
    <citation type="journal article" date="2003" name="Dev. Cell">
        <title>Peering through the pore: nuclear pore complex structure, assembly, and function.</title>
        <authorList>
            <person name="Suntharalingam M."/>
            <person name="Wente S.R."/>
        </authorList>
    </citation>
    <scope>REVIEW</scope>
</reference>
<reference key="13">
    <citation type="journal article" date="2003" name="Nature">
        <title>Targets of the cyclin-dependent kinase Cdk1.</title>
        <authorList>
            <person name="Ubersax J.A."/>
            <person name="Woodbury E.L."/>
            <person name="Quang P.N."/>
            <person name="Paraz M."/>
            <person name="Blethrow J.D."/>
            <person name="Shah K."/>
            <person name="Shokat K.M."/>
            <person name="Morgan D.O."/>
        </authorList>
    </citation>
    <scope>PHOSPHORYLATION BY CDC28</scope>
</reference>
<reference key="14">
    <citation type="journal article" date="2008" name="Mol. Cell. Proteomics">
        <title>A multidimensional chromatography technology for in-depth phosphoproteome analysis.</title>
        <authorList>
            <person name="Albuquerque C.P."/>
            <person name="Smolka M.B."/>
            <person name="Payne S.H."/>
            <person name="Bafna V."/>
            <person name="Eng J."/>
            <person name="Zhou H."/>
        </authorList>
    </citation>
    <scope>IDENTIFICATION BY MASS SPECTROMETRY [LARGE SCALE ANALYSIS]</scope>
</reference>
<reference key="15">
    <citation type="journal article" date="2009" name="Science">
        <title>Global analysis of Cdk1 substrate phosphorylation sites provides insights into evolution.</title>
        <authorList>
            <person name="Holt L.J."/>
            <person name="Tuch B.B."/>
            <person name="Villen J."/>
            <person name="Johnson A.D."/>
            <person name="Gygi S.P."/>
            <person name="Morgan D.O."/>
        </authorList>
    </citation>
    <scope>PHOSPHORYLATION [LARGE SCALE ANALYSIS] AT SER-458 AND SER-464</scope>
    <scope>IDENTIFICATION BY MASS SPECTROMETRY [LARGE SCALE ANALYSIS]</scope>
</reference>
<sequence length="528" mass="58793">MFGIRSGNNNGGFTNLTSQAPQTTQMFQSQSQLQPQPQPQPQQQQQHLQFNGSSDASSLRFGNSLSNTVNANNYSSNIGNNSINNNNIKNGTNNISQHGQGNNPSWVNNPKKRFTPHTVIRRKTTKQNSSSDINQNDDSSSMNATMRNFSKQNQDSKHNERNKSAANNDINSLLSNFNDIPPSVTLQDWQREDEFGSIPSLTTQFVTDKYTAKKTNRSAYDSKNTPNVFDKDSYVRIANIEQNHLDNNYNTAETNNKVHETSSKSSSLSAIIVFGYPESISNELIEHFSHFGHIMEDFQVLRLGRGINPNTFRIFHNHDTGCDENDSTVNKSITLKGRNNESNNKKYPIFTGESWVKLTYNSPSSALRALQENGTIFRGSLIGCIPYSKNAVEQLAGCKIDNVDDIGEFNVSMYQNSSTSSTSNTPSPPNVIITDGTLLREDDNTPAGHAGNPTNISSPIVANSPNKRLDVIDGKLPFMQNAGPNSNIPNLLRNLESKMRQQEAKYRNNEPAGFTHKLSNWLFGWNDL</sequence>
<proteinExistence type="evidence at protein level"/>
<organism>
    <name type="scientific">Saccharomyces cerevisiae (strain ATCC 204508 / S288c)</name>
    <name type="common">Baker's yeast</name>
    <dbReference type="NCBI Taxonomy" id="559292"/>
    <lineage>
        <taxon>Eukaryota</taxon>
        <taxon>Fungi</taxon>
        <taxon>Dikarya</taxon>
        <taxon>Ascomycota</taxon>
        <taxon>Saccharomycotina</taxon>
        <taxon>Saccharomycetes</taxon>
        <taxon>Saccharomycetales</taxon>
        <taxon>Saccharomycetaceae</taxon>
        <taxon>Saccharomyces</taxon>
    </lineage>
</organism>
<dbReference type="EMBL" id="X76709">
    <property type="protein sequence ID" value="CAA54130.1"/>
    <property type="molecule type" value="Genomic_DNA"/>
</dbReference>
<dbReference type="EMBL" id="X95644">
    <property type="protein sequence ID" value="CAA64923.1"/>
    <property type="molecule type" value="Genomic_DNA"/>
</dbReference>
<dbReference type="EMBL" id="Z74136">
    <property type="protein sequence ID" value="CAA98654.1"/>
    <property type="molecule type" value="Genomic_DNA"/>
</dbReference>
<dbReference type="EMBL" id="AY692972">
    <property type="protein sequence ID" value="AAT92991.1"/>
    <property type="molecule type" value="Genomic_DNA"/>
</dbReference>
<dbReference type="EMBL" id="BK006938">
    <property type="protein sequence ID" value="DAA11770.1"/>
    <property type="molecule type" value="Genomic_DNA"/>
</dbReference>
<dbReference type="PIR" id="S67624">
    <property type="entry name" value="S67624"/>
</dbReference>
<dbReference type="RefSeq" id="NP_010195.1">
    <property type="nucleotide sequence ID" value="NM_001180147.1"/>
</dbReference>
<dbReference type="PDB" id="7N85">
    <property type="method" value="EM"/>
    <property type="resolution" value="7.60 A"/>
    <property type="chains" value="V/X=1-528"/>
</dbReference>
<dbReference type="PDB" id="7N9F">
    <property type="method" value="EM"/>
    <property type="resolution" value="37.00 A"/>
    <property type="chains" value="V/X=1-528"/>
</dbReference>
<dbReference type="PDB" id="8TJ5">
    <property type="method" value="EM"/>
    <property type="resolution" value="6.60 A"/>
    <property type="chains" value="V/X=1-528"/>
</dbReference>
<dbReference type="PDBsum" id="7N85"/>
<dbReference type="PDBsum" id="7N9F"/>
<dbReference type="PDBsum" id="8TJ5"/>
<dbReference type="EMDB" id="EMD-24232"/>
<dbReference type="EMDB" id="EMD-24258"/>
<dbReference type="EMDB" id="EMD-41300"/>
<dbReference type="SMR" id="Q05166"/>
<dbReference type="BioGRID" id="31972">
    <property type="interactions" value="153"/>
</dbReference>
<dbReference type="ComplexPortal" id="CPX-824">
    <property type="entry name" value="Nuclear pore complex"/>
</dbReference>
<dbReference type="DIP" id="DIP-1466N"/>
<dbReference type="FunCoup" id="Q05166">
    <property type="interactions" value="142"/>
</dbReference>
<dbReference type="IntAct" id="Q05166">
    <property type="interactions" value="17"/>
</dbReference>
<dbReference type="MINT" id="Q05166"/>
<dbReference type="STRING" id="4932.YDL088C"/>
<dbReference type="TCDB" id="1.I.1.1.1">
    <property type="family name" value="the nuclear pore complex (npc) family"/>
</dbReference>
<dbReference type="iPTMnet" id="Q05166"/>
<dbReference type="PaxDb" id="4932-YDL088C"/>
<dbReference type="PeptideAtlas" id="Q05166"/>
<dbReference type="EnsemblFungi" id="YDL088C_mRNA">
    <property type="protein sequence ID" value="YDL088C"/>
    <property type="gene ID" value="YDL088C"/>
</dbReference>
<dbReference type="GeneID" id="851470"/>
<dbReference type="KEGG" id="sce:YDL088C"/>
<dbReference type="AGR" id="SGD:S000002246"/>
<dbReference type="SGD" id="S000002246">
    <property type="gene designation" value="ASM4"/>
</dbReference>
<dbReference type="VEuPathDB" id="FungiDB:YDL088C"/>
<dbReference type="eggNOG" id="ENOG502QWFW">
    <property type="taxonomic scope" value="Eukaryota"/>
</dbReference>
<dbReference type="HOGENOM" id="CLU_024892_0_0_1"/>
<dbReference type="InParanoid" id="Q05166"/>
<dbReference type="OMA" id="WIKLTYD"/>
<dbReference type="OrthoDB" id="1733656at2759"/>
<dbReference type="BioCyc" id="YEAST:G3O-29496-MONOMER"/>
<dbReference type="Reactome" id="R-SCE-159236">
    <property type="pathway name" value="Transport of Mature mRNA derived from an Intron-Containing Transcript"/>
</dbReference>
<dbReference type="Reactome" id="R-SCE-3371453">
    <property type="pathway name" value="Regulation of HSF1-mediated heat shock response"/>
</dbReference>
<dbReference type="Reactome" id="R-SCE-4085377">
    <property type="pathway name" value="SUMOylation of SUMOylation proteins"/>
</dbReference>
<dbReference type="Reactome" id="R-SCE-4551638">
    <property type="pathway name" value="SUMOylation of chromatin organization proteins"/>
</dbReference>
<dbReference type="Reactome" id="R-SCE-4570464">
    <property type="pathway name" value="SUMOylation of RNA binding proteins"/>
</dbReference>
<dbReference type="BioGRID-ORCS" id="851470">
    <property type="hits" value="1 hit in 10 CRISPR screens"/>
</dbReference>
<dbReference type="PRO" id="PR:Q05166"/>
<dbReference type="Proteomes" id="UP000002311">
    <property type="component" value="Chromosome IV"/>
</dbReference>
<dbReference type="RNAct" id="Q05166">
    <property type="molecule type" value="protein"/>
</dbReference>
<dbReference type="GO" id="GO:0005635">
    <property type="term" value="C:nuclear envelope"/>
    <property type="evidence" value="ECO:0000303"/>
    <property type="project" value="ComplexPortal"/>
</dbReference>
<dbReference type="GO" id="GO:0031965">
    <property type="term" value="C:nuclear membrane"/>
    <property type="evidence" value="ECO:0007669"/>
    <property type="project" value="UniProtKB-SubCell"/>
</dbReference>
<dbReference type="GO" id="GO:0005643">
    <property type="term" value="C:nuclear pore"/>
    <property type="evidence" value="ECO:0000314"/>
    <property type="project" value="SGD"/>
</dbReference>
<dbReference type="GO" id="GO:0044613">
    <property type="term" value="C:nuclear pore central transport channel"/>
    <property type="evidence" value="ECO:0000314"/>
    <property type="project" value="SGD"/>
</dbReference>
<dbReference type="GO" id="GO:0044615">
    <property type="term" value="C:nuclear pore nuclear basket"/>
    <property type="evidence" value="ECO:0000318"/>
    <property type="project" value="GO_Central"/>
</dbReference>
<dbReference type="GO" id="GO:0005543">
    <property type="term" value="F:phospholipid binding"/>
    <property type="evidence" value="ECO:0000314"/>
    <property type="project" value="SGD"/>
</dbReference>
<dbReference type="GO" id="GO:0003697">
    <property type="term" value="F:single-stranded DNA binding"/>
    <property type="evidence" value="ECO:0000314"/>
    <property type="project" value="SGD"/>
</dbReference>
<dbReference type="GO" id="GO:0017056">
    <property type="term" value="F:structural constituent of nuclear pore"/>
    <property type="evidence" value="ECO:0000353"/>
    <property type="project" value="SGD"/>
</dbReference>
<dbReference type="GO" id="GO:0051301">
    <property type="term" value="P:cell division"/>
    <property type="evidence" value="ECO:0007669"/>
    <property type="project" value="UniProtKB-KW"/>
</dbReference>
<dbReference type="GO" id="GO:0031990">
    <property type="term" value="P:mRNA export from nucleus in response to heat stress"/>
    <property type="evidence" value="ECO:0000315"/>
    <property type="project" value="SGD"/>
</dbReference>
<dbReference type="GO" id="GO:0006607">
    <property type="term" value="P:NLS-bearing protein import into nucleus"/>
    <property type="evidence" value="ECO:0000318"/>
    <property type="project" value="GO_Central"/>
</dbReference>
<dbReference type="GO" id="GO:0006999">
    <property type="term" value="P:nuclear pore organization"/>
    <property type="evidence" value="ECO:0000316"/>
    <property type="project" value="SGD"/>
</dbReference>
<dbReference type="GO" id="GO:0006913">
    <property type="term" value="P:nucleocytoplasmic transport"/>
    <property type="evidence" value="ECO:0000303"/>
    <property type="project" value="ComplexPortal"/>
</dbReference>
<dbReference type="CDD" id="cd12721">
    <property type="entry name" value="RRM_Nup53p_fungi"/>
    <property type="match status" value="1"/>
</dbReference>
<dbReference type="FunFam" id="3.30.70.330:FF:000613">
    <property type="entry name" value="Nuclear pore complex subunit"/>
    <property type="match status" value="1"/>
</dbReference>
<dbReference type="Gene3D" id="3.30.70.330">
    <property type="match status" value="1"/>
</dbReference>
<dbReference type="InterPro" id="IPR012677">
    <property type="entry name" value="Nucleotide-bd_a/b_plait_sf"/>
</dbReference>
<dbReference type="InterPro" id="IPR035979">
    <property type="entry name" value="RBD_domain_sf"/>
</dbReference>
<dbReference type="InterPro" id="IPR007846">
    <property type="entry name" value="RRM_NUP35_dom"/>
</dbReference>
<dbReference type="PANTHER" id="PTHR21527">
    <property type="entry name" value="NUCLEOPORIN NUP35"/>
    <property type="match status" value="1"/>
</dbReference>
<dbReference type="PANTHER" id="PTHR21527:SF6">
    <property type="entry name" value="NUCLEOPORIN NUP35"/>
    <property type="match status" value="1"/>
</dbReference>
<dbReference type="Pfam" id="PF05172">
    <property type="entry name" value="RRM_Nup35"/>
    <property type="match status" value="1"/>
</dbReference>
<dbReference type="SUPFAM" id="SSF54928">
    <property type="entry name" value="RNA-binding domain, RBD"/>
    <property type="match status" value="1"/>
</dbReference>
<dbReference type="PROSITE" id="PS51472">
    <property type="entry name" value="RRM_NUP35"/>
    <property type="match status" value="1"/>
</dbReference>
<name>NUP59_YEAST</name>